<comment type="function">
    <text evidence="3">Required for normal cell shape (PubMed:34411374). Plays an important role in cell wall elongation during exponential phase and spore outgrowth (PubMed:34411374). Probably regulates the activity of the penicillin-binding protein PBP2A through a direct interaction (PubMed:34411374). Not required for PBP2A activity, stability and localization (PubMed:34411374).</text>
</comment>
<comment type="subunit">
    <text evidence="3">Interacts with the penicillin-binding protein PBP2A, a monofunctional transpeptidase.</text>
</comment>
<comment type="subcellular location">
    <subcellularLocation>
        <location evidence="2 3">Cell membrane</location>
        <topology evidence="1">Single-pass membrane protein</topology>
    </subcellularLocation>
    <text evidence="2 3">Enriched at cell division sites.</text>
</comment>
<comment type="disruption phenotype">
    <text evidence="2 3">Cells lacking this gene are deformed, being shorter and wider than wild-type cells (PubMed:25954268, PubMed:34411374). Disruption of the gene can suppress the tetracycline sensitivity of the ezrA mutant (PubMed:25954268).</text>
</comment>
<sequence>MRKKALIFTVIFGIIFLAVLLVSASIYKSAMAQKEEGHEAAAAEAKKETDLAHVDQVETFVGKEKYYVVKGTDKKGTALYVWVPADKKAKILSKEAKEGISEDKAAKIIKDEGLVSKQKEVHLAREGNVLLWEVTYLDKEGQYSLSYVDFTTGKILKNITP</sequence>
<reference key="1">
    <citation type="journal article" date="1996" name="Microbiology">
        <title>Sequence analysis of the Bacillus subtilis chromosome region between the serA and kdg loci cloned in a yeast artificial chromosome.</title>
        <authorList>
            <person name="Sorokin A.V."/>
            <person name="Azevedo V."/>
            <person name="Zumstein E."/>
            <person name="Galleron N."/>
            <person name="Ehrlich S.D."/>
            <person name="Serror P."/>
        </authorList>
    </citation>
    <scope>NUCLEOTIDE SEQUENCE [GENOMIC DNA]</scope>
    <source>
        <strain>168 / Marburg / ATCC 6051 / DSM 10 / JCM 1465 / NBRC 13719 / NCIMB 3610 / NRRL NRS-744 / VKM B-501</strain>
    </source>
</reference>
<reference key="2">
    <citation type="journal article" date="1997" name="Nature">
        <title>The complete genome sequence of the Gram-positive bacterium Bacillus subtilis.</title>
        <authorList>
            <person name="Kunst F."/>
            <person name="Ogasawara N."/>
            <person name="Moszer I."/>
            <person name="Albertini A.M."/>
            <person name="Alloni G."/>
            <person name="Azevedo V."/>
            <person name="Bertero M.G."/>
            <person name="Bessieres P."/>
            <person name="Bolotin A."/>
            <person name="Borchert S."/>
            <person name="Borriss R."/>
            <person name="Boursier L."/>
            <person name="Brans A."/>
            <person name="Braun M."/>
            <person name="Brignell S.C."/>
            <person name="Bron S."/>
            <person name="Brouillet S."/>
            <person name="Bruschi C.V."/>
            <person name="Caldwell B."/>
            <person name="Capuano V."/>
            <person name="Carter N.M."/>
            <person name="Choi S.-K."/>
            <person name="Codani J.-J."/>
            <person name="Connerton I.F."/>
            <person name="Cummings N.J."/>
            <person name="Daniel R.A."/>
            <person name="Denizot F."/>
            <person name="Devine K.M."/>
            <person name="Duesterhoeft A."/>
            <person name="Ehrlich S.D."/>
            <person name="Emmerson P.T."/>
            <person name="Entian K.-D."/>
            <person name="Errington J."/>
            <person name="Fabret C."/>
            <person name="Ferrari E."/>
            <person name="Foulger D."/>
            <person name="Fritz C."/>
            <person name="Fujita M."/>
            <person name="Fujita Y."/>
            <person name="Fuma S."/>
            <person name="Galizzi A."/>
            <person name="Galleron N."/>
            <person name="Ghim S.-Y."/>
            <person name="Glaser P."/>
            <person name="Goffeau A."/>
            <person name="Golightly E.J."/>
            <person name="Grandi G."/>
            <person name="Guiseppi G."/>
            <person name="Guy B.J."/>
            <person name="Haga K."/>
            <person name="Haiech J."/>
            <person name="Harwood C.R."/>
            <person name="Henaut A."/>
            <person name="Hilbert H."/>
            <person name="Holsappel S."/>
            <person name="Hosono S."/>
            <person name="Hullo M.-F."/>
            <person name="Itaya M."/>
            <person name="Jones L.-M."/>
            <person name="Joris B."/>
            <person name="Karamata D."/>
            <person name="Kasahara Y."/>
            <person name="Klaerr-Blanchard M."/>
            <person name="Klein C."/>
            <person name="Kobayashi Y."/>
            <person name="Koetter P."/>
            <person name="Koningstein G."/>
            <person name="Krogh S."/>
            <person name="Kumano M."/>
            <person name="Kurita K."/>
            <person name="Lapidus A."/>
            <person name="Lardinois S."/>
            <person name="Lauber J."/>
            <person name="Lazarevic V."/>
            <person name="Lee S.-M."/>
            <person name="Levine A."/>
            <person name="Liu H."/>
            <person name="Masuda S."/>
            <person name="Mauel C."/>
            <person name="Medigue C."/>
            <person name="Medina N."/>
            <person name="Mellado R.P."/>
            <person name="Mizuno M."/>
            <person name="Moestl D."/>
            <person name="Nakai S."/>
            <person name="Noback M."/>
            <person name="Noone D."/>
            <person name="O'Reilly M."/>
            <person name="Ogawa K."/>
            <person name="Ogiwara A."/>
            <person name="Oudega B."/>
            <person name="Park S.-H."/>
            <person name="Parro V."/>
            <person name="Pohl T.M."/>
            <person name="Portetelle D."/>
            <person name="Porwollik S."/>
            <person name="Prescott A.M."/>
            <person name="Presecan E."/>
            <person name="Pujic P."/>
            <person name="Purnelle B."/>
            <person name="Rapoport G."/>
            <person name="Rey M."/>
            <person name="Reynolds S."/>
            <person name="Rieger M."/>
            <person name="Rivolta C."/>
            <person name="Rocha E."/>
            <person name="Roche B."/>
            <person name="Rose M."/>
            <person name="Sadaie Y."/>
            <person name="Sato T."/>
            <person name="Scanlan E."/>
            <person name="Schleich S."/>
            <person name="Schroeter R."/>
            <person name="Scoffone F."/>
            <person name="Sekiguchi J."/>
            <person name="Sekowska A."/>
            <person name="Seror S.J."/>
            <person name="Serror P."/>
            <person name="Shin B.-S."/>
            <person name="Soldo B."/>
            <person name="Sorokin A."/>
            <person name="Tacconi E."/>
            <person name="Takagi T."/>
            <person name="Takahashi H."/>
            <person name="Takemaru K."/>
            <person name="Takeuchi M."/>
            <person name="Tamakoshi A."/>
            <person name="Tanaka T."/>
            <person name="Terpstra P."/>
            <person name="Tognoni A."/>
            <person name="Tosato V."/>
            <person name="Uchiyama S."/>
            <person name="Vandenbol M."/>
            <person name="Vannier F."/>
            <person name="Vassarotti A."/>
            <person name="Viari A."/>
            <person name="Wambutt R."/>
            <person name="Wedler E."/>
            <person name="Wedler H."/>
            <person name="Weitzenegger T."/>
            <person name="Winters P."/>
            <person name="Wipat A."/>
            <person name="Yamamoto H."/>
            <person name="Yamane K."/>
            <person name="Yasumoto K."/>
            <person name="Yata K."/>
            <person name="Yoshida K."/>
            <person name="Yoshikawa H.-F."/>
            <person name="Zumstein E."/>
            <person name="Yoshikawa H."/>
            <person name="Danchin A."/>
        </authorList>
    </citation>
    <scope>NUCLEOTIDE SEQUENCE [LARGE SCALE GENOMIC DNA]</scope>
    <source>
        <strain>168</strain>
    </source>
</reference>
<reference key="3">
    <citation type="journal article" date="2015" name="Front. Microbiol.">
        <title>Tetracycline hypersensitivity of an ezrA mutant links GalE and TseB (YpmB) to cell division.</title>
        <authorList>
            <person name="Gamba P."/>
            <person name="Rietkoetter E."/>
            <person name="Daniel R.A."/>
            <person name="Hamoen L.W."/>
        </authorList>
    </citation>
    <scope>SUBCELLULAR LOCATION</scope>
    <scope>DISRUPTION PHENOTYPE</scope>
</reference>
<reference key="4">
    <citation type="journal article" date="2021" name="Mol. Microbiol.">
        <title>Characterization of TseB: A new actor in cell wall elongation in Bacillus subtilis.</title>
        <authorList>
            <person name="Delisle J."/>
            <person name="Cordier B."/>
            <person name="Audebert S."/>
            <person name="Pophillat M."/>
            <person name="Cluzel C."/>
            <person name="Espinosa L."/>
            <person name="Grangeasse C."/>
            <person name="Galinier A."/>
            <person name="Doan T."/>
        </authorList>
    </citation>
    <scope>FUNCTION</scope>
    <scope>INTERACTION WITH PBP2A</scope>
    <scope>SUBCELLULAR LOCATION</scope>
    <scope>DISRUPTION PHENOTYPE</scope>
    <source>
        <strain>168</strain>
    </source>
</reference>
<reference evidence="9" key="5">
    <citation type="submission" date="2006-05" db="PDB data bank">
        <title>X-ray crystal structure of ypmB protein from Bacillus subtilis.</title>
        <authorList>
            <consortium name="Midwest center for structural genomics (MCSG)"/>
        </authorList>
    </citation>
    <scope>X-RAY CRYSTALLOGRAPHY (1.74 ANGSTROMS) OF 29-161</scope>
    <source>
        <strain>168</strain>
    </source>
</reference>
<feature type="chain" id="PRO_0000049710" description="Probable cell wall elongation regulator TseB">
    <location>
        <begin position="1"/>
        <end position="161"/>
    </location>
</feature>
<feature type="topological domain" description="Cytoplasmic" evidence="7">
    <location>
        <begin position="1"/>
        <end position="5"/>
    </location>
</feature>
<feature type="transmembrane region" description="Helical" evidence="1">
    <location>
        <begin position="6"/>
        <end position="26"/>
    </location>
</feature>
<feature type="topological domain" description="Extracellular" evidence="7">
    <location>
        <begin position="27"/>
        <end position="161"/>
    </location>
</feature>
<feature type="helix" evidence="10">
    <location>
        <begin position="38"/>
        <end position="48"/>
    </location>
</feature>
<feature type="strand" evidence="10">
    <location>
        <begin position="49"/>
        <end position="73"/>
    </location>
</feature>
<feature type="strand" evidence="10">
    <location>
        <begin position="78"/>
        <end position="86"/>
    </location>
</feature>
<feature type="strand" evidence="10">
    <location>
        <begin position="92"/>
        <end position="95"/>
    </location>
</feature>
<feature type="helix" evidence="10">
    <location>
        <begin position="96"/>
        <end position="98"/>
    </location>
</feature>
<feature type="helix" evidence="10">
    <location>
        <begin position="102"/>
        <end position="111"/>
    </location>
</feature>
<feature type="strand" evidence="10">
    <location>
        <begin position="116"/>
        <end position="126"/>
    </location>
</feature>
<feature type="strand" evidence="10">
    <location>
        <begin position="129"/>
        <end position="137"/>
    </location>
</feature>
<feature type="strand" evidence="10">
    <location>
        <begin position="143"/>
        <end position="149"/>
    </location>
</feature>
<feature type="turn" evidence="10">
    <location>
        <begin position="150"/>
        <end position="152"/>
    </location>
</feature>
<feature type="strand" evidence="10">
    <location>
        <begin position="155"/>
        <end position="159"/>
    </location>
</feature>
<proteinExistence type="evidence at protein level"/>
<name>TSEB_BACSU</name>
<organism>
    <name type="scientific">Bacillus subtilis (strain 168)</name>
    <dbReference type="NCBI Taxonomy" id="224308"/>
    <lineage>
        <taxon>Bacteria</taxon>
        <taxon>Bacillati</taxon>
        <taxon>Bacillota</taxon>
        <taxon>Bacilli</taxon>
        <taxon>Bacillales</taxon>
        <taxon>Bacillaceae</taxon>
        <taxon>Bacillus</taxon>
    </lineage>
</organism>
<accession>P54396</accession>
<keyword id="KW-0002">3D-structure</keyword>
<keyword id="KW-1003">Cell membrane</keyword>
<keyword id="KW-0133">Cell shape</keyword>
<keyword id="KW-0472">Membrane</keyword>
<keyword id="KW-1185">Reference proteome</keyword>
<keyword id="KW-0812">Transmembrane</keyword>
<keyword id="KW-1133">Transmembrane helix</keyword>
<evidence type="ECO:0000255" key="1"/>
<evidence type="ECO:0000269" key="2">
    <source>
    </source>
</evidence>
<evidence type="ECO:0000269" key="3">
    <source>
    </source>
</evidence>
<evidence type="ECO:0000303" key="4">
    <source>
    </source>
</evidence>
<evidence type="ECO:0000303" key="5">
    <source>
    </source>
</evidence>
<evidence type="ECO:0000305" key="6"/>
<evidence type="ECO:0000305" key="7">
    <source>
    </source>
</evidence>
<evidence type="ECO:0000312" key="8">
    <source>
        <dbReference type="EMBL" id="CAB14154.1"/>
    </source>
</evidence>
<evidence type="ECO:0007744" key="9">
    <source>
        <dbReference type="PDB" id="2GU3"/>
    </source>
</evidence>
<evidence type="ECO:0007829" key="10">
    <source>
        <dbReference type="PDB" id="2GU3"/>
    </source>
</evidence>
<gene>
    <name evidence="4" type="primary">tseB</name>
    <name evidence="5" type="synonym">ypmB</name>
    <name evidence="8" type="ordered locus">BSU22380</name>
</gene>
<dbReference type="EMBL" id="L47709">
    <property type="protein sequence ID" value="AAB38453.1"/>
    <property type="molecule type" value="Genomic_DNA"/>
</dbReference>
<dbReference type="EMBL" id="AL009126">
    <property type="protein sequence ID" value="CAB14154.1"/>
    <property type="molecule type" value="Genomic_DNA"/>
</dbReference>
<dbReference type="PIR" id="F69938">
    <property type="entry name" value="F69938"/>
</dbReference>
<dbReference type="RefSeq" id="NP_390119.1">
    <property type="nucleotide sequence ID" value="NC_000964.3"/>
</dbReference>
<dbReference type="RefSeq" id="WP_003230665.1">
    <property type="nucleotide sequence ID" value="NZ_OZ025638.1"/>
</dbReference>
<dbReference type="PDB" id="2GU3">
    <property type="method" value="X-ray"/>
    <property type="resolution" value="1.74 A"/>
    <property type="chains" value="A=29-161"/>
</dbReference>
<dbReference type="PDBsum" id="2GU3"/>
<dbReference type="SMR" id="P54396"/>
<dbReference type="FunCoup" id="P54396">
    <property type="interactions" value="1"/>
</dbReference>
<dbReference type="STRING" id="224308.BSU22380"/>
<dbReference type="PaxDb" id="224308-BSU22380"/>
<dbReference type="DNASU" id="939035"/>
<dbReference type="EnsemblBacteria" id="CAB14154">
    <property type="protein sequence ID" value="CAB14154"/>
    <property type="gene ID" value="BSU_22380"/>
</dbReference>
<dbReference type="GeneID" id="939035"/>
<dbReference type="KEGG" id="bsu:BSU22380"/>
<dbReference type="PATRIC" id="fig|224308.179.peg.2442"/>
<dbReference type="eggNOG" id="COG5353">
    <property type="taxonomic scope" value="Bacteria"/>
</dbReference>
<dbReference type="InParanoid" id="P54396"/>
<dbReference type="OrthoDB" id="2381181at2"/>
<dbReference type="PhylomeDB" id="P54396"/>
<dbReference type="BioCyc" id="BSUB:BSU22380-MONOMER"/>
<dbReference type="EvolutionaryTrace" id="P54396"/>
<dbReference type="Proteomes" id="UP000001570">
    <property type="component" value="Chromosome"/>
</dbReference>
<dbReference type="GO" id="GO:0005886">
    <property type="term" value="C:plasma membrane"/>
    <property type="evidence" value="ECO:0007669"/>
    <property type="project" value="UniProtKB-SubCell"/>
</dbReference>
<dbReference type="GO" id="GO:0008360">
    <property type="term" value="P:regulation of cell shape"/>
    <property type="evidence" value="ECO:0007669"/>
    <property type="project" value="UniProtKB-KW"/>
</dbReference>
<dbReference type="Gene3D" id="3.10.450.40">
    <property type="match status" value="2"/>
</dbReference>
<dbReference type="InterPro" id="IPR046350">
    <property type="entry name" value="Cystatin_sf"/>
</dbReference>
<dbReference type="InterPro" id="IPR025711">
    <property type="entry name" value="PepSY"/>
</dbReference>
<dbReference type="InterPro" id="IPR054944">
    <property type="entry name" value="regulator_TseB"/>
</dbReference>
<dbReference type="InterPro" id="IPR041401">
    <property type="entry name" value="TseB-like_dom"/>
</dbReference>
<dbReference type="NCBIfam" id="NF040668">
    <property type="entry name" value="regulator_TseB"/>
    <property type="match status" value="1"/>
</dbReference>
<dbReference type="Pfam" id="PF03413">
    <property type="entry name" value="PepSY"/>
    <property type="match status" value="1"/>
</dbReference>
<dbReference type="Pfam" id="PF17881">
    <property type="entry name" value="TseB"/>
    <property type="match status" value="1"/>
</dbReference>
<dbReference type="SUPFAM" id="SSF54403">
    <property type="entry name" value="Cystatin/monellin"/>
    <property type="match status" value="2"/>
</dbReference>
<protein>
    <recommendedName>
        <fullName evidence="6">Probable cell wall elongation regulator TseB</fullName>
    </recommendedName>
    <alternativeName>
        <fullName evidence="4">Tetracycline sensitivity suppressor of ezrA</fullName>
    </alternativeName>
</protein>